<geneLocation type="mitochondrion"/>
<comment type="function">
    <text evidence="3">Component of the ubiquinol-cytochrome c reductase complex (complex III or cytochrome b-c1 complex) that is part of the mitochondrial respiratory chain. The b-c1 complex mediates electron transfer from ubiquinol to cytochrome c. Contributes to the generation of a proton gradient across the mitochondrial membrane that is then used for ATP synthesis.</text>
</comment>
<comment type="cofactor">
    <cofactor evidence="3">
        <name>heme b</name>
        <dbReference type="ChEBI" id="CHEBI:60344"/>
    </cofactor>
    <text evidence="3">Binds 2 heme b groups non-covalently.</text>
</comment>
<comment type="subunit">
    <text evidence="3">Fungal cytochrome b-c1 complex contains 10 subunits; 3 respiratory subunits, 2 core proteins and 5 low-molecular weight proteins. Cytochrome b-c1 complex is a homodimer.</text>
</comment>
<comment type="subcellular location">
    <subcellularLocation>
        <location evidence="3">Mitochondrion inner membrane</location>
        <topology evidence="3">Multi-pass membrane protein</topology>
    </subcellularLocation>
</comment>
<comment type="miscellaneous">
    <text evidence="1">Heme 1 (or BL or b562) is low-potential and absorbs at about 562 nm, and heme 2 (or BH or b566) is high-potential and absorbs at about 566 nm.</text>
</comment>
<comment type="similarity">
    <text evidence="4 5">Belongs to the cytochrome b family.</text>
</comment>
<comment type="caution">
    <text evidence="3">The protein contains only eight transmembrane helices, not nine as predicted by bioinformatics tools.</text>
</comment>
<protein>
    <recommendedName>
        <fullName>Cytochrome b</fullName>
    </recommendedName>
    <alternativeName>
        <fullName>Complex III subunit 3</fullName>
    </alternativeName>
    <alternativeName>
        <fullName>Complex III subunit III</fullName>
    </alternativeName>
    <alternativeName>
        <fullName>Cytochrome b-c1 complex subunit 3</fullName>
    </alternativeName>
    <alternativeName>
        <fullName>Ubiquinol-cytochrome-c reductase complex cytochrome b subunit</fullName>
    </alternativeName>
</protein>
<feature type="chain" id="PRO_0000061758" description="Cytochrome b">
    <location>
        <begin position="1"/>
        <end position="385"/>
    </location>
</feature>
<feature type="transmembrane region" description="Helical" evidence="3">
    <location>
        <begin position="32"/>
        <end position="52"/>
    </location>
</feature>
<feature type="transmembrane region" description="Helical" evidence="3">
    <location>
        <begin position="76"/>
        <end position="98"/>
    </location>
</feature>
<feature type="transmembrane region" description="Helical" evidence="3">
    <location>
        <begin position="113"/>
        <end position="133"/>
    </location>
</feature>
<feature type="transmembrane region" description="Helical" evidence="3">
    <location>
        <begin position="179"/>
        <end position="199"/>
    </location>
</feature>
<feature type="transmembrane region" description="Helical" evidence="3">
    <location>
        <begin position="225"/>
        <end position="245"/>
    </location>
</feature>
<feature type="transmembrane region" description="Helical" evidence="3">
    <location>
        <begin position="289"/>
        <end position="309"/>
    </location>
</feature>
<feature type="transmembrane region" description="Helical" evidence="3">
    <location>
        <begin position="321"/>
        <end position="341"/>
    </location>
</feature>
<feature type="transmembrane region" description="Helical" evidence="3">
    <location>
        <begin position="348"/>
        <end position="368"/>
    </location>
</feature>
<feature type="binding site" description="axial binding residue" evidence="5">
    <location>
        <position position="82"/>
    </location>
    <ligand>
        <name>heme b</name>
        <dbReference type="ChEBI" id="CHEBI:60344"/>
        <label>b562</label>
    </ligand>
    <ligandPart>
        <name>Fe</name>
        <dbReference type="ChEBI" id="CHEBI:18248"/>
    </ligandPart>
</feature>
<feature type="binding site" description="axial binding residue" evidence="5">
    <location>
        <position position="96"/>
    </location>
    <ligand>
        <name>heme b</name>
        <dbReference type="ChEBI" id="CHEBI:60344"/>
        <label>b566</label>
    </ligand>
    <ligandPart>
        <name>Fe</name>
        <dbReference type="ChEBI" id="CHEBI:18248"/>
    </ligandPart>
</feature>
<feature type="binding site" description="axial binding residue" evidence="5">
    <location>
        <position position="183"/>
    </location>
    <ligand>
        <name>heme b</name>
        <dbReference type="ChEBI" id="CHEBI:60344"/>
        <label>b562</label>
    </ligand>
    <ligandPart>
        <name>Fe</name>
        <dbReference type="ChEBI" id="CHEBI:18248"/>
    </ligandPart>
</feature>
<feature type="binding site" description="axial binding residue" evidence="5">
    <location>
        <position position="197"/>
    </location>
    <ligand>
        <name>heme b</name>
        <dbReference type="ChEBI" id="CHEBI:60344"/>
        <label>b566</label>
    </ligand>
    <ligandPart>
        <name>Fe</name>
        <dbReference type="ChEBI" id="CHEBI:18248"/>
    </ligandPart>
</feature>
<feature type="binding site" evidence="2">
    <location>
        <position position="202"/>
    </location>
    <ligand>
        <name>a ubiquinone</name>
        <dbReference type="ChEBI" id="CHEBI:16389"/>
    </ligand>
</feature>
<name>CYB_MONSE</name>
<keyword id="KW-0249">Electron transport</keyword>
<keyword id="KW-0349">Heme</keyword>
<keyword id="KW-0408">Iron</keyword>
<keyword id="KW-0472">Membrane</keyword>
<keyword id="KW-0479">Metal-binding</keyword>
<keyword id="KW-0496">Mitochondrion</keyword>
<keyword id="KW-0999">Mitochondrion inner membrane</keyword>
<keyword id="KW-0679">Respiratory chain</keyword>
<keyword id="KW-0812">Transmembrane</keyword>
<keyword id="KW-1133">Transmembrane helix</keyword>
<keyword id="KW-0813">Transport</keyword>
<keyword id="KW-0830">Ubiquinone</keyword>
<proteinExistence type="inferred from homology"/>
<dbReference type="EMBL" id="AJ430679">
    <property type="protein sequence ID" value="CAD23420.1"/>
    <property type="molecule type" value="Genomic_DNA"/>
</dbReference>
<dbReference type="RefSeq" id="NP_861465.1">
    <property type="nucleotide sequence ID" value="NC_004918.1"/>
</dbReference>
<dbReference type="SMR" id="Q7YEV2"/>
<dbReference type="GeneID" id="1494515"/>
<dbReference type="GO" id="GO:0005743">
    <property type="term" value="C:mitochondrial inner membrane"/>
    <property type="evidence" value="ECO:0007669"/>
    <property type="project" value="UniProtKB-SubCell"/>
</dbReference>
<dbReference type="GO" id="GO:0045275">
    <property type="term" value="C:respiratory chain complex III"/>
    <property type="evidence" value="ECO:0007669"/>
    <property type="project" value="InterPro"/>
</dbReference>
<dbReference type="GO" id="GO:0046872">
    <property type="term" value="F:metal ion binding"/>
    <property type="evidence" value="ECO:0007669"/>
    <property type="project" value="UniProtKB-KW"/>
</dbReference>
<dbReference type="GO" id="GO:0008121">
    <property type="term" value="F:ubiquinol-cytochrome-c reductase activity"/>
    <property type="evidence" value="ECO:0007669"/>
    <property type="project" value="InterPro"/>
</dbReference>
<dbReference type="GO" id="GO:0006122">
    <property type="term" value="P:mitochondrial electron transport, ubiquinol to cytochrome c"/>
    <property type="evidence" value="ECO:0007669"/>
    <property type="project" value="TreeGrafter"/>
</dbReference>
<dbReference type="CDD" id="cd00290">
    <property type="entry name" value="cytochrome_b_C"/>
    <property type="match status" value="1"/>
</dbReference>
<dbReference type="CDD" id="cd00284">
    <property type="entry name" value="Cytochrome_b_N"/>
    <property type="match status" value="1"/>
</dbReference>
<dbReference type="FunFam" id="1.20.810.10:FF:000002">
    <property type="entry name" value="Cytochrome b"/>
    <property type="match status" value="1"/>
</dbReference>
<dbReference type="Gene3D" id="1.20.810.10">
    <property type="entry name" value="Cytochrome Bc1 Complex, Chain C"/>
    <property type="match status" value="1"/>
</dbReference>
<dbReference type="InterPro" id="IPR005798">
    <property type="entry name" value="Cyt_b/b6_C"/>
</dbReference>
<dbReference type="InterPro" id="IPR036150">
    <property type="entry name" value="Cyt_b/b6_C_sf"/>
</dbReference>
<dbReference type="InterPro" id="IPR005797">
    <property type="entry name" value="Cyt_b/b6_N"/>
</dbReference>
<dbReference type="InterPro" id="IPR027387">
    <property type="entry name" value="Cytb/b6-like_sf"/>
</dbReference>
<dbReference type="InterPro" id="IPR030689">
    <property type="entry name" value="Cytochrome_b"/>
</dbReference>
<dbReference type="InterPro" id="IPR048260">
    <property type="entry name" value="Cytochrome_b_C_euk/bac"/>
</dbReference>
<dbReference type="InterPro" id="IPR048259">
    <property type="entry name" value="Cytochrome_b_N_euk/bac"/>
</dbReference>
<dbReference type="InterPro" id="IPR016174">
    <property type="entry name" value="Di-haem_cyt_TM"/>
</dbReference>
<dbReference type="PANTHER" id="PTHR19271">
    <property type="entry name" value="CYTOCHROME B"/>
    <property type="match status" value="1"/>
</dbReference>
<dbReference type="PANTHER" id="PTHR19271:SF16">
    <property type="entry name" value="CYTOCHROME B"/>
    <property type="match status" value="1"/>
</dbReference>
<dbReference type="Pfam" id="PF00032">
    <property type="entry name" value="Cytochrom_B_C"/>
    <property type="match status" value="1"/>
</dbReference>
<dbReference type="Pfam" id="PF00033">
    <property type="entry name" value="Cytochrome_B"/>
    <property type="match status" value="1"/>
</dbReference>
<dbReference type="PIRSF" id="PIRSF038885">
    <property type="entry name" value="COB"/>
    <property type="match status" value="1"/>
</dbReference>
<dbReference type="SUPFAM" id="SSF81648">
    <property type="entry name" value="a domain/subunit of cytochrome bc1 complex (Ubiquinol-cytochrome c reductase)"/>
    <property type="match status" value="1"/>
</dbReference>
<dbReference type="SUPFAM" id="SSF81342">
    <property type="entry name" value="Transmembrane di-heme cytochromes"/>
    <property type="match status" value="1"/>
</dbReference>
<dbReference type="PROSITE" id="PS51003">
    <property type="entry name" value="CYTB_CTER"/>
    <property type="match status" value="1"/>
</dbReference>
<dbReference type="PROSITE" id="PS51002">
    <property type="entry name" value="CYTB_NTER"/>
    <property type="match status" value="1"/>
</dbReference>
<sequence length="385" mass="43644">MAFRKSNVYLNLVNSYLIDSPQPSSINYWWNMGSLLGLCLVIQILTGIFMAMHYSSNIELAFSSVEHIMRDVQTGWLLRYTHANGASFFFAVMYMHMAKGLYYGSYRSPRTLVWIIGVIIFVATMAAAFLGYCCVYGQMSHWGATVITNLFSAIPFVGKDIVQWLWGGFAVSNPTIQRFFALHYLVPFIIAALVVMHFMALHVHGSSNPLGITGNLDRLPMHGYFIFKDLITVFVFLIIFSLFVFYSPNTLGHPDNYIPGNPMVTPASIVPEWYLLPFYAILRSIPDKLLGVITMFGAILVLLVLPLTDKSVIRGNTFKVISKLFFFLFVFNFILLGVLGSCHVEVPFVQMGQYATFLYFAYFLIFVPIISYIENLLFYIGNNNS</sequence>
<evidence type="ECO:0000250" key="1"/>
<evidence type="ECO:0000250" key="2">
    <source>
        <dbReference type="UniProtKB" id="P00157"/>
    </source>
</evidence>
<evidence type="ECO:0000250" key="3">
    <source>
        <dbReference type="UniProtKB" id="P00163"/>
    </source>
</evidence>
<evidence type="ECO:0000255" key="4">
    <source>
        <dbReference type="PROSITE-ProRule" id="PRU00967"/>
    </source>
</evidence>
<evidence type="ECO:0000255" key="5">
    <source>
        <dbReference type="PROSITE-ProRule" id="PRU00968"/>
    </source>
</evidence>
<reference key="1">
    <citation type="journal article" date="2003" name="Nucleic Acids Res.">
        <title>Sequence analysis of three mitochondrial DNA molecules reveals interesting differences among Saccharomyces yeasts.</title>
        <authorList>
            <person name="Langkjaer R.B."/>
            <person name="Casaregola S."/>
            <person name="Ussery D.W."/>
            <person name="Gaillardin C."/>
            <person name="Piskur J."/>
        </authorList>
    </citation>
    <scope>NUCLEOTIDE SEQUENCE [LARGE SCALE GENOMIC DNA]</scope>
    <source>
        <strain>ATCC 58439 / CBS 4311 / JCM 5179 / BCRC 21501 / NBRC 1838 / NRRL Y-12661</strain>
    </source>
</reference>
<organism>
    <name type="scientific">Monosporozyma servazzii</name>
    <name type="common">Yeast</name>
    <name type="synonym">Kazachstania servazzii</name>
    <dbReference type="NCBI Taxonomy" id="27293"/>
    <lineage>
        <taxon>Eukaryota</taxon>
        <taxon>Fungi</taxon>
        <taxon>Dikarya</taxon>
        <taxon>Ascomycota</taxon>
        <taxon>Saccharomycotina</taxon>
        <taxon>Saccharomycetes</taxon>
        <taxon>Saccharomycetales</taxon>
        <taxon>Saccharomycetaceae</taxon>
        <taxon>Monosporozyma</taxon>
    </lineage>
</organism>
<gene>
    <name type="primary">COB</name>
    <name type="synonym">CYTB</name>
</gene>
<accession>Q7YEV2</accession>